<proteinExistence type="inferred from homology"/>
<reference key="1">
    <citation type="journal article" date="2004" name="Nat. Genet.">
        <title>Comparison of genome degradation in Paratyphi A and Typhi, human-restricted serovars of Salmonella enterica that cause typhoid.</title>
        <authorList>
            <person name="McClelland M."/>
            <person name="Sanderson K.E."/>
            <person name="Clifton S.W."/>
            <person name="Latreille P."/>
            <person name="Porwollik S."/>
            <person name="Sabo A."/>
            <person name="Meyer R."/>
            <person name="Bieri T."/>
            <person name="Ozersky P."/>
            <person name="McLellan M."/>
            <person name="Harkins C.R."/>
            <person name="Wang C."/>
            <person name="Nguyen C."/>
            <person name="Berghoff A."/>
            <person name="Elliott G."/>
            <person name="Kohlberg S."/>
            <person name="Strong C."/>
            <person name="Du F."/>
            <person name="Carter J."/>
            <person name="Kremizki C."/>
            <person name="Layman D."/>
            <person name="Leonard S."/>
            <person name="Sun H."/>
            <person name="Fulton L."/>
            <person name="Nash W."/>
            <person name="Miner T."/>
            <person name="Minx P."/>
            <person name="Delehaunty K."/>
            <person name="Fronick C."/>
            <person name="Magrini V."/>
            <person name="Nhan M."/>
            <person name="Warren W."/>
            <person name="Florea L."/>
            <person name="Spieth J."/>
            <person name="Wilson R.K."/>
        </authorList>
    </citation>
    <scope>NUCLEOTIDE SEQUENCE [LARGE SCALE GENOMIC DNA]</scope>
    <source>
        <strain>ATCC 9150 / SARB42</strain>
    </source>
</reference>
<feature type="chain" id="PRO_0000349946" description="Ribosomal RNA large subunit methyltransferase F">
    <location>
        <begin position="1"/>
        <end position="308"/>
    </location>
</feature>
<evidence type="ECO:0000255" key="1">
    <source>
        <dbReference type="HAMAP-Rule" id="MF_01848"/>
    </source>
</evidence>
<dbReference type="EC" id="2.1.1.181" evidence="1"/>
<dbReference type="EMBL" id="CP000026">
    <property type="protein sequence ID" value="AAV77837.1"/>
    <property type="molecule type" value="Genomic_DNA"/>
</dbReference>
<dbReference type="RefSeq" id="WP_001275964.1">
    <property type="nucleotide sequence ID" value="NC_006511.1"/>
</dbReference>
<dbReference type="SMR" id="Q5PG24"/>
<dbReference type="KEGG" id="spt:SPA1927"/>
<dbReference type="HOGENOM" id="CLU_027534_3_0_6"/>
<dbReference type="Proteomes" id="UP000008185">
    <property type="component" value="Chromosome"/>
</dbReference>
<dbReference type="GO" id="GO:0005737">
    <property type="term" value="C:cytoplasm"/>
    <property type="evidence" value="ECO:0007669"/>
    <property type="project" value="UniProtKB-SubCell"/>
</dbReference>
<dbReference type="GO" id="GO:0052907">
    <property type="term" value="F:23S rRNA (adenine(1618)-N(6))-methyltransferase activity"/>
    <property type="evidence" value="ECO:0007669"/>
    <property type="project" value="UniProtKB-EC"/>
</dbReference>
<dbReference type="GO" id="GO:0070475">
    <property type="term" value="P:rRNA base methylation"/>
    <property type="evidence" value="ECO:0007669"/>
    <property type="project" value="TreeGrafter"/>
</dbReference>
<dbReference type="FunFam" id="3.40.50.150:FF:000045">
    <property type="entry name" value="Ribosomal RNA large subunit methyltransferase F"/>
    <property type="match status" value="1"/>
</dbReference>
<dbReference type="Gene3D" id="3.40.50.150">
    <property type="entry name" value="Vaccinia Virus protein VP39"/>
    <property type="match status" value="1"/>
</dbReference>
<dbReference type="HAMAP" id="MF_01848">
    <property type="entry name" value="23SrRNA_methyltr_F"/>
    <property type="match status" value="1"/>
</dbReference>
<dbReference type="InterPro" id="IPR010286">
    <property type="entry name" value="METTL16/RlmF"/>
</dbReference>
<dbReference type="InterPro" id="IPR016909">
    <property type="entry name" value="rRNA_lsu_MeTfrase_F"/>
</dbReference>
<dbReference type="InterPro" id="IPR029063">
    <property type="entry name" value="SAM-dependent_MTases_sf"/>
</dbReference>
<dbReference type="NCBIfam" id="NF008725">
    <property type="entry name" value="PRK11727.1"/>
    <property type="match status" value="1"/>
</dbReference>
<dbReference type="PANTHER" id="PTHR13393:SF0">
    <property type="entry name" value="RNA N6-ADENOSINE-METHYLTRANSFERASE METTL16"/>
    <property type="match status" value="1"/>
</dbReference>
<dbReference type="PANTHER" id="PTHR13393">
    <property type="entry name" value="SAM-DEPENDENT METHYLTRANSFERASE"/>
    <property type="match status" value="1"/>
</dbReference>
<dbReference type="Pfam" id="PF05971">
    <property type="entry name" value="Methyltransf_10"/>
    <property type="match status" value="1"/>
</dbReference>
<dbReference type="PIRSF" id="PIRSF029038">
    <property type="entry name" value="Mtase_YbiN_prd"/>
    <property type="match status" value="1"/>
</dbReference>
<dbReference type="SUPFAM" id="SSF53335">
    <property type="entry name" value="S-adenosyl-L-methionine-dependent methyltransferases"/>
    <property type="match status" value="1"/>
</dbReference>
<protein>
    <recommendedName>
        <fullName evidence="1">Ribosomal RNA large subunit methyltransferase F</fullName>
        <ecNumber evidence="1">2.1.1.181</ecNumber>
    </recommendedName>
    <alternativeName>
        <fullName evidence="1">23S rRNA mA1618 methyltransferase</fullName>
    </alternativeName>
    <alternativeName>
        <fullName evidence="1">rRNA adenine N-6-methyltransferase</fullName>
    </alternativeName>
</protein>
<gene>
    <name evidence="1" type="primary">rlmF</name>
    <name type="ordered locus">SPA1927</name>
</gene>
<organism>
    <name type="scientific">Salmonella paratyphi A (strain ATCC 9150 / SARB42)</name>
    <dbReference type="NCBI Taxonomy" id="295319"/>
    <lineage>
        <taxon>Bacteria</taxon>
        <taxon>Pseudomonadati</taxon>
        <taxon>Pseudomonadota</taxon>
        <taxon>Gammaproteobacteria</taxon>
        <taxon>Enterobacterales</taxon>
        <taxon>Enterobacteriaceae</taxon>
        <taxon>Salmonella</taxon>
    </lineage>
</organism>
<name>RLMF_SALPA</name>
<comment type="function">
    <text evidence="1">Specifically methylates the adenine in position 1618 of 23S rRNA.</text>
</comment>
<comment type="catalytic activity">
    <reaction evidence="1">
        <text>adenosine(1618) in 23S rRNA + S-adenosyl-L-methionine = N(6)-methyladenosine(1618) in 23S rRNA + S-adenosyl-L-homocysteine + H(+)</text>
        <dbReference type="Rhea" id="RHEA:16497"/>
        <dbReference type="Rhea" id="RHEA-COMP:10229"/>
        <dbReference type="Rhea" id="RHEA-COMP:10231"/>
        <dbReference type="ChEBI" id="CHEBI:15378"/>
        <dbReference type="ChEBI" id="CHEBI:57856"/>
        <dbReference type="ChEBI" id="CHEBI:59789"/>
        <dbReference type="ChEBI" id="CHEBI:74411"/>
        <dbReference type="ChEBI" id="CHEBI:74449"/>
        <dbReference type="EC" id="2.1.1.181"/>
    </reaction>
</comment>
<comment type="subcellular location">
    <subcellularLocation>
        <location evidence="1">Cytoplasm</location>
    </subcellularLocation>
</comment>
<comment type="similarity">
    <text evidence="1">Belongs to the methyltransferase superfamily. METTL16/RlmF family.</text>
</comment>
<keyword id="KW-0963">Cytoplasm</keyword>
<keyword id="KW-0489">Methyltransferase</keyword>
<keyword id="KW-0698">rRNA processing</keyword>
<keyword id="KW-0949">S-adenosyl-L-methionine</keyword>
<keyword id="KW-0808">Transferase</keyword>
<accession>Q5PG24</accession>
<sequence length="308" mass="34324">MSAQKPGLHPRNRHQHRYDLAALCQTTPELTSFLIRTPAGEQSVDFANPQAVKALNKALLAHFYAVTHWDIPPGFLCPPVPGRADYIHHLADLLGETTGSIPAQATILDVGVGANCIYPLIGVHEYGWRFTGSEVSDAAMSSAQAIIQANTGLSRAIRLRRQKDPAAIFTGIIHKNEFYDATLCNPPFHDSAAAARAGSERKRRNLGQNKDDALNFGGQQQELWCEGGEVAFIKKMIAESQTFRRQVLWFTTLVSRGENLPPLYRALTEAGAVKVVKKEMAQGQKQSRFIAWTFMDDDQRRRFITRKR</sequence>